<comment type="function">
    <text evidence="1">Plays an essential role in the initiation and regulation of chromosomal replication. ATP-DnaA binds to the origin of replication (oriC) to initiate formation of the DNA replication initiation complex once per cell cycle. Binds the DnaA box (a 9 base pair repeat at the origin) and separates the double-stranded (ds)DNA. Forms a right-handed helical filament on oriC DNA; dsDNA binds to the exterior of the filament while single-stranded (ss)DNA is stabiized in the filament's interior. The ATP-DnaA-oriC complex binds and stabilizes one strand of the AT-rich DNA unwinding element (DUE), permitting loading of DNA polymerase. After initiation quickly degrades to an ADP-DnaA complex that is not apt for DNA replication. Binds acidic phospholipids.</text>
</comment>
<comment type="subunit">
    <text evidence="1">Oligomerizes as a right-handed, spiral filament on DNA at oriC.</text>
</comment>
<comment type="subcellular location">
    <subcellularLocation>
        <location evidence="1">Cytoplasm</location>
    </subcellularLocation>
</comment>
<comment type="domain">
    <text evidence="1">Domain I is involved in oligomerization and binding regulators, domain II is flexibile and of varying length in different bacteria, domain III forms the AAA+ region, while domain IV binds dsDNA.</text>
</comment>
<comment type="similarity">
    <text evidence="1">Belongs to the DnaA family.</text>
</comment>
<keyword id="KW-0067">ATP-binding</keyword>
<keyword id="KW-0963">Cytoplasm</keyword>
<keyword id="KW-0235">DNA replication</keyword>
<keyword id="KW-0238">DNA-binding</keyword>
<keyword id="KW-0446">Lipid-binding</keyword>
<keyword id="KW-0547">Nucleotide-binding</keyword>
<dbReference type="EMBL" id="CP000419">
    <property type="protein sequence ID" value="ABJ65396.1"/>
    <property type="molecule type" value="Genomic_DNA"/>
</dbReference>
<dbReference type="RefSeq" id="WP_002948584.1">
    <property type="nucleotide sequence ID" value="NC_008532.1"/>
</dbReference>
<dbReference type="SMR" id="Q03N26"/>
<dbReference type="GeneID" id="66897904"/>
<dbReference type="KEGG" id="ste:STER_0001"/>
<dbReference type="HOGENOM" id="CLU_026910_3_2_9"/>
<dbReference type="GO" id="GO:0005737">
    <property type="term" value="C:cytoplasm"/>
    <property type="evidence" value="ECO:0007669"/>
    <property type="project" value="UniProtKB-SubCell"/>
</dbReference>
<dbReference type="GO" id="GO:0005886">
    <property type="term" value="C:plasma membrane"/>
    <property type="evidence" value="ECO:0007669"/>
    <property type="project" value="TreeGrafter"/>
</dbReference>
<dbReference type="GO" id="GO:0005524">
    <property type="term" value="F:ATP binding"/>
    <property type="evidence" value="ECO:0007669"/>
    <property type="project" value="UniProtKB-UniRule"/>
</dbReference>
<dbReference type="GO" id="GO:0016887">
    <property type="term" value="F:ATP hydrolysis activity"/>
    <property type="evidence" value="ECO:0007669"/>
    <property type="project" value="InterPro"/>
</dbReference>
<dbReference type="GO" id="GO:0003688">
    <property type="term" value="F:DNA replication origin binding"/>
    <property type="evidence" value="ECO:0007669"/>
    <property type="project" value="UniProtKB-UniRule"/>
</dbReference>
<dbReference type="GO" id="GO:0008289">
    <property type="term" value="F:lipid binding"/>
    <property type="evidence" value="ECO:0007669"/>
    <property type="project" value="UniProtKB-KW"/>
</dbReference>
<dbReference type="GO" id="GO:0006270">
    <property type="term" value="P:DNA replication initiation"/>
    <property type="evidence" value="ECO:0007669"/>
    <property type="project" value="UniProtKB-UniRule"/>
</dbReference>
<dbReference type="GO" id="GO:0006275">
    <property type="term" value="P:regulation of DNA replication"/>
    <property type="evidence" value="ECO:0007669"/>
    <property type="project" value="UniProtKB-UniRule"/>
</dbReference>
<dbReference type="CDD" id="cd00009">
    <property type="entry name" value="AAA"/>
    <property type="match status" value="1"/>
</dbReference>
<dbReference type="CDD" id="cd06571">
    <property type="entry name" value="Bac_DnaA_C"/>
    <property type="match status" value="1"/>
</dbReference>
<dbReference type="FunFam" id="1.10.1750.10:FF:000002">
    <property type="entry name" value="Chromosomal replication initiator protein DnaA"/>
    <property type="match status" value="1"/>
</dbReference>
<dbReference type="FunFam" id="3.40.50.300:FF:000668">
    <property type="entry name" value="Chromosomal replication initiator protein DnaA"/>
    <property type="match status" value="1"/>
</dbReference>
<dbReference type="Gene3D" id="1.10.1750.10">
    <property type="match status" value="1"/>
</dbReference>
<dbReference type="Gene3D" id="1.10.8.60">
    <property type="match status" value="1"/>
</dbReference>
<dbReference type="Gene3D" id="3.30.300.180">
    <property type="match status" value="1"/>
</dbReference>
<dbReference type="Gene3D" id="3.40.50.300">
    <property type="entry name" value="P-loop containing nucleotide triphosphate hydrolases"/>
    <property type="match status" value="1"/>
</dbReference>
<dbReference type="HAMAP" id="MF_00377">
    <property type="entry name" value="DnaA_bact"/>
    <property type="match status" value="1"/>
</dbReference>
<dbReference type="InterPro" id="IPR003593">
    <property type="entry name" value="AAA+_ATPase"/>
</dbReference>
<dbReference type="InterPro" id="IPR001957">
    <property type="entry name" value="Chromosome_initiator_DnaA"/>
</dbReference>
<dbReference type="InterPro" id="IPR020591">
    <property type="entry name" value="Chromosome_initiator_DnaA-like"/>
</dbReference>
<dbReference type="InterPro" id="IPR018312">
    <property type="entry name" value="Chromosome_initiator_DnaA_CS"/>
</dbReference>
<dbReference type="InterPro" id="IPR013159">
    <property type="entry name" value="DnaA_C"/>
</dbReference>
<dbReference type="InterPro" id="IPR013317">
    <property type="entry name" value="DnaA_dom"/>
</dbReference>
<dbReference type="InterPro" id="IPR038454">
    <property type="entry name" value="DnaA_N_sf"/>
</dbReference>
<dbReference type="InterPro" id="IPR027417">
    <property type="entry name" value="P-loop_NTPase"/>
</dbReference>
<dbReference type="InterPro" id="IPR010921">
    <property type="entry name" value="Trp_repressor/repl_initiator"/>
</dbReference>
<dbReference type="NCBIfam" id="TIGR00362">
    <property type="entry name" value="DnaA"/>
    <property type="match status" value="1"/>
</dbReference>
<dbReference type="PANTHER" id="PTHR30050">
    <property type="entry name" value="CHROMOSOMAL REPLICATION INITIATOR PROTEIN DNAA"/>
    <property type="match status" value="1"/>
</dbReference>
<dbReference type="PANTHER" id="PTHR30050:SF2">
    <property type="entry name" value="CHROMOSOMAL REPLICATION INITIATOR PROTEIN DNAA"/>
    <property type="match status" value="1"/>
</dbReference>
<dbReference type="Pfam" id="PF00308">
    <property type="entry name" value="Bac_DnaA"/>
    <property type="match status" value="1"/>
</dbReference>
<dbReference type="Pfam" id="PF08299">
    <property type="entry name" value="Bac_DnaA_C"/>
    <property type="match status" value="1"/>
</dbReference>
<dbReference type="PRINTS" id="PR00051">
    <property type="entry name" value="DNAA"/>
</dbReference>
<dbReference type="SMART" id="SM00382">
    <property type="entry name" value="AAA"/>
    <property type="match status" value="1"/>
</dbReference>
<dbReference type="SMART" id="SM00760">
    <property type="entry name" value="Bac_DnaA_C"/>
    <property type="match status" value="1"/>
</dbReference>
<dbReference type="SUPFAM" id="SSF52540">
    <property type="entry name" value="P-loop containing nucleoside triphosphate hydrolases"/>
    <property type="match status" value="1"/>
</dbReference>
<dbReference type="SUPFAM" id="SSF48295">
    <property type="entry name" value="TrpR-like"/>
    <property type="match status" value="1"/>
</dbReference>
<dbReference type="PROSITE" id="PS01008">
    <property type="entry name" value="DNAA"/>
    <property type="match status" value="1"/>
</dbReference>
<name>DNAA_STRTD</name>
<reference key="1">
    <citation type="journal article" date="2006" name="Proc. Natl. Acad. Sci. U.S.A.">
        <title>Comparative genomics of the lactic acid bacteria.</title>
        <authorList>
            <person name="Makarova K.S."/>
            <person name="Slesarev A."/>
            <person name="Wolf Y.I."/>
            <person name="Sorokin A."/>
            <person name="Mirkin B."/>
            <person name="Koonin E.V."/>
            <person name="Pavlov A."/>
            <person name="Pavlova N."/>
            <person name="Karamychev V."/>
            <person name="Polouchine N."/>
            <person name="Shakhova V."/>
            <person name="Grigoriev I."/>
            <person name="Lou Y."/>
            <person name="Rohksar D."/>
            <person name="Lucas S."/>
            <person name="Huang K."/>
            <person name="Goodstein D.M."/>
            <person name="Hawkins T."/>
            <person name="Plengvidhya V."/>
            <person name="Welker D."/>
            <person name="Hughes J."/>
            <person name="Goh Y."/>
            <person name="Benson A."/>
            <person name="Baldwin K."/>
            <person name="Lee J.-H."/>
            <person name="Diaz-Muniz I."/>
            <person name="Dosti B."/>
            <person name="Smeianov V."/>
            <person name="Wechter W."/>
            <person name="Barabote R."/>
            <person name="Lorca G."/>
            <person name="Altermann E."/>
            <person name="Barrangou R."/>
            <person name="Ganesan B."/>
            <person name="Xie Y."/>
            <person name="Rawsthorne H."/>
            <person name="Tamir D."/>
            <person name="Parker C."/>
            <person name="Breidt F."/>
            <person name="Broadbent J.R."/>
            <person name="Hutkins R."/>
            <person name="O'Sullivan D."/>
            <person name="Steele J."/>
            <person name="Unlu G."/>
            <person name="Saier M.H. Jr."/>
            <person name="Klaenhammer T."/>
            <person name="Richardson P."/>
            <person name="Kozyavkin S."/>
            <person name="Weimer B.C."/>
            <person name="Mills D.A."/>
        </authorList>
    </citation>
    <scope>NUCLEOTIDE SEQUENCE [LARGE SCALE GENOMIC DNA]</scope>
    <source>
        <strain>ATCC BAA-491 / LMD-9</strain>
    </source>
</reference>
<evidence type="ECO:0000255" key="1">
    <source>
        <dbReference type="HAMAP-Rule" id="MF_00377"/>
    </source>
</evidence>
<proteinExistence type="inferred from homology"/>
<feature type="chain" id="PRO_1000048745" description="Chromosomal replication initiator protein DnaA">
    <location>
        <begin position="1"/>
        <end position="454"/>
    </location>
</feature>
<feature type="region of interest" description="Domain I, interacts with DnaA modulators" evidence="1">
    <location>
        <begin position="1"/>
        <end position="83"/>
    </location>
</feature>
<feature type="region of interest" description="Domain II" evidence="1">
    <location>
        <begin position="83"/>
        <end position="113"/>
    </location>
</feature>
<feature type="region of interest" description="Domain III, AAA+ region" evidence="1">
    <location>
        <begin position="114"/>
        <end position="332"/>
    </location>
</feature>
<feature type="region of interest" description="Domain IV, binds dsDNA" evidence="1">
    <location>
        <begin position="333"/>
        <end position="454"/>
    </location>
</feature>
<feature type="binding site" evidence="1">
    <location>
        <position position="158"/>
    </location>
    <ligand>
        <name>ATP</name>
        <dbReference type="ChEBI" id="CHEBI:30616"/>
    </ligand>
</feature>
<feature type="binding site" evidence="1">
    <location>
        <position position="160"/>
    </location>
    <ligand>
        <name>ATP</name>
        <dbReference type="ChEBI" id="CHEBI:30616"/>
    </ligand>
</feature>
<feature type="binding site" evidence="1">
    <location>
        <position position="161"/>
    </location>
    <ligand>
        <name>ATP</name>
        <dbReference type="ChEBI" id="CHEBI:30616"/>
    </ligand>
</feature>
<feature type="binding site" evidence="1">
    <location>
        <position position="162"/>
    </location>
    <ligand>
        <name>ATP</name>
        <dbReference type="ChEBI" id="CHEBI:30616"/>
    </ligand>
</feature>
<protein>
    <recommendedName>
        <fullName evidence="1">Chromosomal replication initiator protein DnaA</fullName>
    </recommendedName>
</protein>
<organism>
    <name type="scientific">Streptococcus thermophilus (strain ATCC BAA-491 / LMD-9)</name>
    <dbReference type="NCBI Taxonomy" id="322159"/>
    <lineage>
        <taxon>Bacteria</taxon>
        <taxon>Bacillati</taxon>
        <taxon>Bacillota</taxon>
        <taxon>Bacilli</taxon>
        <taxon>Lactobacillales</taxon>
        <taxon>Streptococcaceae</taxon>
        <taxon>Streptococcus</taxon>
    </lineage>
</organism>
<sequence>MTEKEHFFWNKLLELAKEELTQATFDYYVLDTKLIKIQDNVATILLEEVKKLFWEKNMQSFILMTGFEVYNSEIKVEYVFDEALVSETKPTLANNDFSNKREQQTPDLPTLNSDLNSKYTFDNFIQGDENRWSVAASLAVADSPGATYNPLFIYGGPGLGKTHLLNAIGNKVLHDNPQARIKYITAENFINEFVLHIRLDKMDELKLKYRHLDVLLIDDIQSLAKKSTQATQEEFFNTFNVLHDNNKQIVLTSDRNPDQLNEMEERLVTRFKWGLTVNITPPDFETRVAILTNKIMDYDYHFPPETIEYLAGQFDSNVRDLEGALKDISLVANVRQLDTITVEVAAEAIRARKIDGPKLTLIPIEDIQSEVGKFYNVTVKEIKATKRTQNIVLARQVAMYLAREMTDNSLPKIGKEFGGRDHSTVLHAYNKIKNMLAQDDSLRIEIDTIKNKIK</sequence>
<gene>
    <name evidence="1" type="primary">dnaA</name>
    <name type="ordered locus">STER_0001</name>
</gene>
<accession>Q03N26</accession>